<sequence length="184" mass="19445">MSSNSINAEARAELAELIKELAVVHGEVTLSSGKKADYYIDVRRATLHARASRLIGQLLREATADWDYDAVGGLTLGADPVATAIMHADGRDINAFVVRKEAKKHGMQRRIEGPDLTGKKVLVVEDTTTTGNSPLTAVAALREAGIEVVGVATVVDRATGADEVIAAEGLPYRSLLGLSDLGLN</sequence>
<name>PYRE_CORGL</name>
<feature type="chain" id="PRO_0000110691" description="Orotate phosphoribosyltransferase">
    <location>
        <begin position="1"/>
        <end position="184"/>
    </location>
</feature>
<feature type="binding site" evidence="1">
    <location>
        <position position="99"/>
    </location>
    <ligand>
        <name>5-phospho-alpha-D-ribose 1-diphosphate</name>
        <dbReference type="ChEBI" id="CHEBI:58017"/>
        <note>ligand shared between dimeric partners</note>
    </ligand>
</feature>
<feature type="binding site" description="in other chain" evidence="1">
    <location>
        <position position="100"/>
    </location>
    <ligand>
        <name>5-phospho-alpha-D-ribose 1-diphosphate</name>
        <dbReference type="ChEBI" id="CHEBI:58017"/>
        <note>ligand shared between dimeric partners</note>
    </ligand>
</feature>
<feature type="binding site" evidence="1">
    <location>
        <position position="103"/>
    </location>
    <ligand>
        <name>5-phospho-alpha-D-ribose 1-diphosphate</name>
        <dbReference type="ChEBI" id="CHEBI:58017"/>
        <note>ligand shared between dimeric partners</note>
    </ligand>
</feature>
<feature type="binding site" evidence="1">
    <location>
        <position position="105"/>
    </location>
    <ligand>
        <name>5-phospho-alpha-D-ribose 1-diphosphate</name>
        <dbReference type="ChEBI" id="CHEBI:58017"/>
        <note>ligand shared between dimeric partners</note>
    </ligand>
</feature>
<feature type="binding site" description="in other chain" evidence="1">
    <location>
        <begin position="125"/>
        <end position="133"/>
    </location>
    <ligand>
        <name>5-phospho-alpha-D-ribose 1-diphosphate</name>
        <dbReference type="ChEBI" id="CHEBI:58017"/>
        <note>ligand shared between dimeric partners</note>
    </ligand>
</feature>
<feature type="binding site" evidence="1">
    <location>
        <position position="129"/>
    </location>
    <ligand>
        <name>orotate</name>
        <dbReference type="ChEBI" id="CHEBI:30839"/>
    </ligand>
</feature>
<feature type="binding site" evidence="1">
    <location>
        <position position="157"/>
    </location>
    <ligand>
        <name>orotate</name>
        <dbReference type="ChEBI" id="CHEBI:30839"/>
    </ligand>
</feature>
<protein>
    <recommendedName>
        <fullName evidence="1">Orotate phosphoribosyltransferase</fullName>
        <shortName evidence="1">OPRT</shortName>
        <shortName evidence="1">OPRTase</shortName>
        <ecNumber evidence="1">2.4.2.10</ecNumber>
    </recommendedName>
</protein>
<proteinExistence type="evidence at protein level"/>
<accession>Q8NM11</accession>
<evidence type="ECO:0000255" key="1">
    <source>
        <dbReference type="HAMAP-Rule" id="MF_01208"/>
    </source>
</evidence>
<organism>
    <name type="scientific">Corynebacterium glutamicum (strain ATCC 13032 / DSM 20300 / JCM 1318 / BCRC 11384 / CCUG 27702 / LMG 3730 / NBRC 12168 / NCIMB 10025 / NRRL B-2784 / 534)</name>
    <dbReference type="NCBI Taxonomy" id="196627"/>
    <lineage>
        <taxon>Bacteria</taxon>
        <taxon>Bacillati</taxon>
        <taxon>Actinomycetota</taxon>
        <taxon>Actinomycetes</taxon>
        <taxon>Mycobacteriales</taxon>
        <taxon>Corynebacteriaceae</taxon>
        <taxon>Corynebacterium</taxon>
    </lineage>
</organism>
<comment type="function">
    <text evidence="1">Catalyzes the transfer of a ribosyl phosphate group from 5-phosphoribose 1-diphosphate to orotate, leading to the formation of orotidine monophosphate (OMP).</text>
</comment>
<comment type="catalytic activity">
    <reaction evidence="1">
        <text>orotidine 5'-phosphate + diphosphate = orotate + 5-phospho-alpha-D-ribose 1-diphosphate</text>
        <dbReference type="Rhea" id="RHEA:10380"/>
        <dbReference type="ChEBI" id="CHEBI:30839"/>
        <dbReference type="ChEBI" id="CHEBI:33019"/>
        <dbReference type="ChEBI" id="CHEBI:57538"/>
        <dbReference type="ChEBI" id="CHEBI:58017"/>
        <dbReference type="EC" id="2.4.2.10"/>
    </reaction>
</comment>
<comment type="cofactor">
    <cofactor evidence="1">
        <name>Mg(2+)</name>
        <dbReference type="ChEBI" id="CHEBI:18420"/>
    </cofactor>
</comment>
<comment type="pathway">
    <text evidence="1">Pyrimidine metabolism; UMP biosynthesis via de novo pathway; UMP from orotate: step 1/2.</text>
</comment>
<comment type="subunit">
    <text evidence="1">Homodimer.</text>
</comment>
<comment type="similarity">
    <text evidence="1">Belongs to the purine/pyrimidine phosphoribosyltransferase family. PyrE subfamily.</text>
</comment>
<gene>
    <name evidence="1" type="primary">pyrE</name>
    <name type="ordered locus">Cgl2773</name>
    <name type="ordered locus">cg3071</name>
</gene>
<keyword id="KW-0002">3D-structure</keyword>
<keyword id="KW-0328">Glycosyltransferase</keyword>
<keyword id="KW-0460">Magnesium</keyword>
<keyword id="KW-0665">Pyrimidine biosynthesis</keyword>
<keyword id="KW-1185">Reference proteome</keyword>
<keyword id="KW-0808">Transferase</keyword>
<dbReference type="EC" id="2.4.2.10" evidence="1"/>
<dbReference type="EMBL" id="BA000036">
    <property type="protein sequence ID" value="BAC00167.1"/>
    <property type="molecule type" value="Genomic_DNA"/>
</dbReference>
<dbReference type="EMBL" id="BX927156">
    <property type="protein sequence ID" value="CAF20794.1"/>
    <property type="molecule type" value="Genomic_DNA"/>
</dbReference>
<dbReference type="RefSeq" id="NP_601967.1">
    <property type="nucleotide sequence ID" value="NC_003450.3"/>
</dbReference>
<dbReference type="RefSeq" id="WP_003862850.1">
    <property type="nucleotide sequence ID" value="NC_006958.1"/>
</dbReference>
<dbReference type="PDB" id="2P1Z">
    <property type="method" value="X-ray"/>
    <property type="resolution" value="2.44 A"/>
    <property type="chains" value="A/B=12-173"/>
</dbReference>
<dbReference type="PDBsum" id="2P1Z"/>
<dbReference type="SMR" id="Q8NM11"/>
<dbReference type="STRING" id="196627.cg3071"/>
<dbReference type="GeneID" id="1020717"/>
<dbReference type="KEGG" id="cgb:cg3071"/>
<dbReference type="KEGG" id="cgl:Cgl2773"/>
<dbReference type="PATRIC" id="fig|196627.13.peg.2704"/>
<dbReference type="eggNOG" id="COG0461">
    <property type="taxonomic scope" value="Bacteria"/>
</dbReference>
<dbReference type="HOGENOM" id="CLU_074878_2_1_11"/>
<dbReference type="OrthoDB" id="1493031at2"/>
<dbReference type="BioCyc" id="CORYNE:G18NG-12390-MONOMER"/>
<dbReference type="UniPathway" id="UPA00070">
    <property type="reaction ID" value="UER00119"/>
</dbReference>
<dbReference type="Proteomes" id="UP000000582">
    <property type="component" value="Chromosome"/>
</dbReference>
<dbReference type="Proteomes" id="UP000001009">
    <property type="component" value="Chromosome"/>
</dbReference>
<dbReference type="GO" id="GO:0000287">
    <property type="term" value="F:magnesium ion binding"/>
    <property type="evidence" value="ECO:0007669"/>
    <property type="project" value="UniProtKB-UniRule"/>
</dbReference>
<dbReference type="GO" id="GO:0004588">
    <property type="term" value="F:orotate phosphoribosyltransferase activity"/>
    <property type="evidence" value="ECO:0007669"/>
    <property type="project" value="UniProtKB-UniRule"/>
</dbReference>
<dbReference type="GO" id="GO:0044205">
    <property type="term" value="P:'de novo' UMP biosynthetic process"/>
    <property type="evidence" value="ECO:0007669"/>
    <property type="project" value="UniProtKB-UniRule"/>
</dbReference>
<dbReference type="GO" id="GO:0019856">
    <property type="term" value="P:pyrimidine nucleobase biosynthetic process"/>
    <property type="evidence" value="ECO:0007669"/>
    <property type="project" value="TreeGrafter"/>
</dbReference>
<dbReference type="CDD" id="cd06223">
    <property type="entry name" value="PRTases_typeI"/>
    <property type="match status" value="1"/>
</dbReference>
<dbReference type="FunFam" id="3.40.50.2020:FF:000029">
    <property type="entry name" value="Orotate phosphoribosyltransferase"/>
    <property type="match status" value="1"/>
</dbReference>
<dbReference type="Gene3D" id="3.40.50.2020">
    <property type="match status" value="1"/>
</dbReference>
<dbReference type="HAMAP" id="MF_01208">
    <property type="entry name" value="PyrE"/>
    <property type="match status" value="1"/>
</dbReference>
<dbReference type="InterPro" id="IPR023031">
    <property type="entry name" value="OPRT"/>
</dbReference>
<dbReference type="InterPro" id="IPR004467">
    <property type="entry name" value="Or_phspho_trans_dom"/>
</dbReference>
<dbReference type="InterPro" id="IPR000836">
    <property type="entry name" value="PRibTrfase_dom"/>
</dbReference>
<dbReference type="InterPro" id="IPR029057">
    <property type="entry name" value="PRTase-like"/>
</dbReference>
<dbReference type="NCBIfam" id="TIGR00336">
    <property type="entry name" value="pyrE"/>
    <property type="match status" value="1"/>
</dbReference>
<dbReference type="PANTHER" id="PTHR19278">
    <property type="entry name" value="OROTATE PHOSPHORIBOSYLTRANSFERASE"/>
    <property type="match status" value="1"/>
</dbReference>
<dbReference type="PANTHER" id="PTHR19278:SF9">
    <property type="entry name" value="URIDINE 5'-MONOPHOSPHATE SYNTHASE"/>
    <property type="match status" value="1"/>
</dbReference>
<dbReference type="Pfam" id="PF00156">
    <property type="entry name" value="Pribosyltran"/>
    <property type="match status" value="1"/>
</dbReference>
<dbReference type="SUPFAM" id="SSF53271">
    <property type="entry name" value="PRTase-like"/>
    <property type="match status" value="1"/>
</dbReference>
<reference key="1">
    <citation type="journal article" date="2003" name="Appl. Microbiol. Biotechnol.">
        <title>The Corynebacterium glutamicum genome: features and impacts on biotechnological processes.</title>
        <authorList>
            <person name="Ikeda M."/>
            <person name="Nakagawa S."/>
        </authorList>
    </citation>
    <scope>NUCLEOTIDE SEQUENCE [LARGE SCALE GENOMIC DNA]</scope>
    <source>
        <strain>ATCC 13032 / DSM 20300 / JCM 1318 / BCRC 11384 / CCUG 27702 / LMG 3730 / NBRC 12168 / NCIMB 10025 / NRRL B-2784 / 534</strain>
    </source>
</reference>
<reference key="2">
    <citation type="journal article" date="2003" name="J. Biotechnol.">
        <title>The complete Corynebacterium glutamicum ATCC 13032 genome sequence and its impact on the production of L-aspartate-derived amino acids and vitamins.</title>
        <authorList>
            <person name="Kalinowski J."/>
            <person name="Bathe B."/>
            <person name="Bartels D."/>
            <person name="Bischoff N."/>
            <person name="Bott M."/>
            <person name="Burkovski A."/>
            <person name="Dusch N."/>
            <person name="Eggeling L."/>
            <person name="Eikmanns B.J."/>
            <person name="Gaigalat L."/>
            <person name="Goesmann A."/>
            <person name="Hartmann M."/>
            <person name="Huthmacher K."/>
            <person name="Kraemer R."/>
            <person name="Linke B."/>
            <person name="McHardy A.C."/>
            <person name="Meyer F."/>
            <person name="Moeckel B."/>
            <person name="Pfefferle W."/>
            <person name="Puehler A."/>
            <person name="Rey D.A."/>
            <person name="Rueckert C."/>
            <person name="Rupp O."/>
            <person name="Sahm H."/>
            <person name="Wendisch V.F."/>
            <person name="Wiegraebe I."/>
            <person name="Tauch A."/>
        </authorList>
    </citation>
    <scope>NUCLEOTIDE SEQUENCE [LARGE SCALE GENOMIC DNA]</scope>
    <source>
        <strain>ATCC 13032 / DSM 20300 / JCM 1318 / BCRC 11384 / CCUG 27702 / LMG 3730 / NBRC 12168 / NCIMB 10025 / NRRL B-2784 / 534</strain>
    </source>
</reference>